<gene>
    <name evidence="1" type="primary">lipB</name>
    <name type="ordered locus">Veis_0471</name>
</gene>
<accession>A1WF49</accession>
<organism>
    <name type="scientific">Verminephrobacter eiseniae (strain EF01-2)</name>
    <dbReference type="NCBI Taxonomy" id="391735"/>
    <lineage>
        <taxon>Bacteria</taxon>
        <taxon>Pseudomonadati</taxon>
        <taxon>Pseudomonadota</taxon>
        <taxon>Betaproteobacteria</taxon>
        <taxon>Burkholderiales</taxon>
        <taxon>Comamonadaceae</taxon>
        <taxon>Verminephrobacter</taxon>
    </lineage>
</organism>
<evidence type="ECO:0000255" key="1">
    <source>
        <dbReference type="HAMAP-Rule" id="MF_00013"/>
    </source>
</evidence>
<evidence type="ECO:0000255" key="2">
    <source>
        <dbReference type="PROSITE-ProRule" id="PRU01067"/>
    </source>
</evidence>
<feature type="chain" id="PRO_0000321673" description="Octanoyltransferase">
    <location>
        <begin position="1"/>
        <end position="231"/>
    </location>
</feature>
<feature type="domain" description="BPL/LPL catalytic" evidence="2">
    <location>
        <begin position="29"/>
        <end position="231"/>
    </location>
</feature>
<feature type="active site" description="Acyl-thioester intermediate" evidence="1">
    <location>
        <position position="195"/>
    </location>
</feature>
<feature type="binding site" evidence="1">
    <location>
        <begin position="68"/>
        <end position="75"/>
    </location>
    <ligand>
        <name>substrate</name>
    </ligand>
</feature>
<feature type="binding site" evidence="1">
    <location>
        <begin position="164"/>
        <end position="166"/>
    </location>
    <ligand>
        <name>substrate</name>
    </ligand>
</feature>
<feature type="binding site" evidence="1">
    <location>
        <begin position="177"/>
        <end position="179"/>
    </location>
    <ligand>
        <name>substrate</name>
    </ligand>
</feature>
<feature type="site" description="Lowers pKa of active site Cys" evidence="1">
    <location>
        <position position="161"/>
    </location>
</feature>
<proteinExistence type="inferred from homology"/>
<keyword id="KW-0012">Acyltransferase</keyword>
<keyword id="KW-0963">Cytoplasm</keyword>
<keyword id="KW-1185">Reference proteome</keyword>
<keyword id="KW-0808">Transferase</keyword>
<name>LIPB_VEREI</name>
<comment type="function">
    <text evidence="1">Catalyzes the transfer of endogenously produced octanoic acid from octanoyl-acyl-carrier-protein onto the lipoyl domains of lipoate-dependent enzymes. Lipoyl-ACP can also act as a substrate although octanoyl-ACP is likely to be the physiological substrate.</text>
</comment>
<comment type="catalytic activity">
    <reaction evidence="1">
        <text>octanoyl-[ACP] + L-lysyl-[protein] = N(6)-octanoyl-L-lysyl-[protein] + holo-[ACP] + H(+)</text>
        <dbReference type="Rhea" id="RHEA:17665"/>
        <dbReference type="Rhea" id="RHEA-COMP:9636"/>
        <dbReference type="Rhea" id="RHEA-COMP:9685"/>
        <dbReference type="Rhea" id="RHEA-COMP:9752"/>
        <dbReference type="Rhea" id="RHEA-COMP:9928"/>
        <dbReference type="ChEBI" id="CHEBI:15378"/>
        <dbReference type="ChEBI" id="CHEBI:29969"/>
        <dbReference type="ChEBI" id="CHEBI:64479"/>
        <dbReference type="ChEBI" id="CHEBI:78463"/>
        <dbReference type="ChEBI" id="CHEBI:78809"/>
        <dbReference type="EC" id="2.3.1.181"/>
    </reaction>
</comment>
<comment type="pathway">
    <text evidence="1">Protein modification; protein lipoylation via endogenous pathway; protein N(6)-(lipoyl)lysine from octanoyl-[acyl-carrier-protein]: step 1/2.</text>
</comment>
<comment type="subcellular location">
    <subcellularLocation>
        <location evidence="1">Cytoplasm</location>
    </subcellularLocation>
</comment>
<comment type="miscellaneous">
    <text evidence="1">In the reaction, the free carboxyl group of octanoic acid is attached via an amide linkage to the epsilon-amino group of a specific lysine residue of lipoyl domains of lipoate-dependent enzymes.</text>
</comment>
<comment type="similarity">
    <text evidence="1">Belongs to the LipB family.</text>
</comment>
<reference key="1">
    <citation type="submission" date="2006-12" db="EMBL/GenBank/DDBJ databases">
        <title>Complete sequence of chromosome 1 of Verminephrobacter eiseniae EF01-2.</title>
        <authorList>
            <person name="Copeland A."/>
            <person name="Lucas S."/>
            <person name="Lapidus A."/>
            <person name="Barry K."/>
            <person name="Detter J.C."/>
            <person name="Glavina del Rio T."/>
            <person name="Dalin E."/>
            <person name="Tice H."/>
            <person name="Pitluck S."/>
            <person name="Chertkov O."/>
            <person name="Brettin T."/>
            <person name="Bruce D."/>
            <person name="Han C."/>
            <person name="Tapia R."/>
            <person name="Gilna P."/>
            <person name="Schmutz J."/>
            <person name="Larimer F."/>
            <person name="Land M."/>
            <person name="Hauser L."/>
            <person name="Kyrpides N."/>
            <person name="Kim E."/>
            <person name="Stahl D."/>
            <person name="Richardson P."/>
        </authorList>
    </citation>
    <scope>NUCLEOTIDE SEQUENCE [LARGE SCALE GENOMIC DNA]</scope>
    <source>
        <strain>EF01-2</strain>
    </source>
</reference>
<protein>
    <recommendedName>
        <fullName evidence="1">Octanoyltransferase</fullName>
        <ecNumber evidence="1">2.3.1.181</ecNumber>
    </recommendedName>
    <alternativeName>
        <fullName evidence="1">Lipoate-protein ligase B</fullName>
    </alternativeName>
    <alternativeName>
        <fullName evidence="1">Lipoyl/octanoyl transferase</fullName>
    </alternativeName>
    <alternativeName>
        <fullName evidence="1">Octanoyl-[acyl-carrier-protein]-protein N-octanoyltransferase</fullName>
    </alternativeName>
</protein>
<dbReference type="EC" id="2.3.1.181" evidence="1"/>
<dbReference type="EMBL" id="CP000542">
    <property type="protein sequence ID" value="ABM56256.1"/>
    <property type="molecule type" value="Genomic_DNA"/>
</dbReference>
<dbReference type="RefSeq" id="WP_011808272.1">
    <property type="nucleotide sequence ID" value="NC_008786.1"/>
</dbReference>
<dbReference type="SMR" id="A1WF49"/>
<dbReference type="STRING" id="391735.Veis_0471"/>
<dbReference type="GeneID" id="76459181"/>
<dbReference type="KEGG" id="vei:Veis_0471"/>
<dbReference type="eggNOG" id="COG0321">
    <property type="taxonomic scope" value="Bacteria"/>
</dbReference>
<dbReference type="HOGENOM" id="CLU_035168_3_1_4"/>
<dbReference type="OrthoDB" id="9787061at2"/>
<dbReference type="UniPathway" id="UPA00538">
    <property type="reaction ID" value="UER00592"/>
</dbReference>
<dbReference type="Proteomes" id="UP000000374">
    <property type="component" value="Chromosome"/>
</dbReference>
<dbReference type="GO" id="GO:0005737">
    <property type="term" value="C:cytoplasm"/>
    <property type="evidence" value="ECO:0007669"/>
    <property type="project" value="UniProtKB-SubCell"/>
</dbReference>
<dbReference type="GO" id="GO:0033819">
    <property type="term" value="F:lipoyl(octanoyl) transferase activity"/>
    <property type="evidence" value="ECO:0007669"/>
    <property type="project" value="UniProtKB-EC"/>
</dbReference>
<dbReference type="GO" id="GO:0036211">
    <property type="term" value="P:protein modification process"/>
    <property type="evidence" value="ECO:0007669"/>
    <property type="project" value="InterPro"/>
</dbReference>
<dbReference type="CDD" id="cd16444">
    <property type="entry name" value="LipB"/>
    <property type="match status" value="1"/>
</dbReference>
<dbReference type="Gene3D" id="3.30.930.10">
    <property type="entry name" value="Bira Bifunctional Protein, Domain 2"/>
    <property type="match status" value="1"/>
</dbReference>
<dbReference type="HAMAP" id="MF_00013">
    <property type="entry name" value="LipB"/>
    <property type="match status" value="1"/>
</dbReference>
<dbReference type="InterPro" id="IPR045864">
    <property type="entry name" value="aa-tRNA-synth_II/BPL/LPL"/>
</dbReference>
<dbReference type="InterPro" id="IPR004143">
    <property type="entry name" value="BPL_LPL_catalytic"/>
</dbReference>
<dbReference type="InterPro" id="IPR000544">
    <property type="entry name" value="Octanoyltransferase"/>
</dbReference>
<dbReference type="InterPro" id="IPR020605">
    <property type="entry name" value="Octanoyltransferase_CS"/>
</dbReference>
<dbReference type="NCBIfam" id="TIGR00214">
    <property type="entry name" value="lipB"/>
    <property type="match status" value="1"/>
</dbReference>
<dbReference type="PANTHER" id="PTHR10993:SF7">
    <property type="entry name" value="LIPOYLTRANSFERASE 2, MITOCHONDRIAL-RELATED"/>
    <property type="match status" value="1"/>
</dbReference>
<dbReference type="PANTHER" id="PTHR10993">
    <property type="entry name" value="OCTANOYLTRANSFERASE"/>
    <property type="match status" value="1"/>
</dbReference>
<dbReference type="Pfam" id="PF21948">
    <property type="entry name" value="LplA-B_cat"/>
    <property type="match status" value="1"/>
</dbReference>
<dbReference type="PIRSF" id="PIRSF016262">
    <property type="entry name" value="LPLase"/>
    <property type="match status" value="1"/>
</dbReference>
<dbReference type="SUPFAM" id="SSF55681">
    <property type="entry name" value="Class II aaRS and biotin synthetases"/>
    <property type="match status" value="1"/>
</dbReference>
<dbReference type="PROSITE" id="PS51733">
    <property type="entry name" value="BPL_LPL_CATALYTIC"/>
    <property type="match status" value="1"/>
</dbReference>
<dbReference type="PROSITE" id="PS01313">
    <property type="entry name" value="LIPB"/>
    <property type="match status" value="1"/>
</dbReference>
<sequence>MSMVVRTLGRVDYLATVQAMQDYTARRGPQDPDLLWLCEHDRLYTQGLAGQDRHVLAPGDIPVLQSNRGGQVTFHGPGQVVAYPLIDLRRAGYYVKEYVYRIEEAVIRCLAQWGVTGHRVAGAPGIYVRPDDPGGHALLPLRPPKSPGTPAPAPDFQGLGKIAALGVKVSRHCSYHGVALNVAMDLEPFARINPCGYAGLRTVDLSTIGVRLRWDEAAQLLGRQLCIWLAP</sequence>